<feature type="chain" id="PRO_1000197628" description="SsrA-binding protein">
    <location>
        <begin position="1"/>
        <end position="155"/>
    </location>
</feature>
<reference key="1">
    <citation type="journal article" date="2010" name="Genome Biol.">
        <title>Structure and dynamics of the pan-genome of Streptococcus pneumoniae and closely related species.</title>
        <authorList>
            <person name="Donati C."/>
            <person name="Hiller N.L."/>
            <person name="Tettelin H."/>
            <person name="Muzzi A."/>
            <person name="Croucher N.J."/>
            <person name="Angiuoli S.V."/>
            <person name="Oggioni M."/>
            <person name="Dunning Hotopp J.C."/>
            <person name="Hu F.Z."/>
            <person name="Riley D.R."/>
            <person name="Covacci A."/>
            <person name="Mitchell T.J."/>
            <person name="Bentley S.D."/>
            <person name="Kilian M."/>
            <person name="Ehrlich G.D."/>
            <person name="Rappuoli R."/>
            <person name="Moxon E.R."/>
            <person name="Masignani V."/>
        </authorList>
    </citation>
    <scope>NUCLEOTIDE SEQUENCE [LARGE SCALE GENOMIC DNA]</scope>
    <source>
        <strain>JJA</strain>
    </source>
</reference>
<accession>C1CDX1</accession>
<organism>
    <name type="scientific">Streptococcus pneumoniae (strain JJA)</name>
    <dbReference type="NCBI Taxonomy" id="488222"/>
    <lineage>
        <taxon>Bacteria</taxon>
        <taxon>Bacillati</taxon>
        <taxon>Bacillota</taxon>
        <taxon>Bacilli</taxon>
        <taxon>Lactobacillales</taxon>
        <taxon>Streptococcaceae</taxon>
        <taxon>Streptococcus</taxon>
    </lineage>
</organism>
<evidence type="ECO:0000255" key="1">
    <source>
        <dbReference type="HAMAP-Rule" id="MF_00023"/>
    </source>
</evidence>
<keyword id="KW-0963">Cytoplasm</keyword>
<keyword id="KW-0694">RNA-binding</keyword>
<protein>
    <recommendedName>
        <fullName evidence="1">SsrA-binding protein</fullName>
    </recommendedName>
    <alternativeName>
        <fullName evidence="1">Small protein B</fullName>
    </alternativeName>
</protein>
<dbReference type="EMBL" id="CP000919">
    <property type="protein sequence ID" value="ACO19760.1"/>
    <property type="molecule type" value="Genomic_DNA"/>
</dbReference>
<dbReference type="RefSeq" id="WP_001051750.1">
    <property type="nucleotide sequence ID" value="NC_012466.1"/>
</dbReference>
<dbReference type="SMR" id="C1CDX1"/>
<dbReference type="GeneID" id="93739761"/>
<dbReference type="KEGG" id="sjj:SPJ_0917"/>
<dbReference type="HOGENOM" id="CLU_108953_0_0_9"/>
<dbReference type="Proteomes" id="UP000002206">
    <property type="component" value="Chromosome"/>
</dbReference>
<dbReference type="GO" id="GO:0005829">
    <property type="term" value="C:cytosol"/>
    <property type="evidence" value="ECO:0007669"/>
    <property type="project" value="TreeGrafter"/>
</dbReference>
<dbReference type="GO" id="GO:0003723">
    <property type="term" value="F:RNA binding"/>
    <property type="evidence" value="ECO:0007669"/>
    <property type="project" value="UniProtKB-UniRule"/>
</dbReference>
<dbReference type="GO" id="GO:0070929">
    <property type="term" value="P:trans-translation"/>
    <property type="evidence" value="ECO:0007669"/>
    <property type="project" value="UniProtKB-UniRule"/>
</dbReference>
<dbReference type="CDD" id="cd09294">
    <property type="entry name" value="SmpB"/>
    <property type="match status" value="1"/>
</dbReference>
<dbReference type="Gene3D" id="2.40.280.10">
    <property type="match status" value="1"/>
</dbReference>
<dbReference type="HAMAP" id="MF_00023">
    <property type="entry name" value="SmpB"/>
    <property type="match status" value="1"/>
</dbReference>
<dbReference type="InterPro" id="IPR023620">
    <property type="entry name" value="SmpB"/>
</dbReference>
<dbReference type="InterPro" id="IPR000037">
    <property type="entry name" value="SsrA-bd_prot"/>
</dbReference>
<dbReference type="InterPro" id="IPR020081">
    <property type="entry name" value="SsrA-bd_prot_CS"/>
</dbReference>
<dbReference type="NCBIfam" id="NF003843">
    <property type="entry name" value="PRK05422.1"/>
    <property type="match status" value="1"/>
</dbReference>
<dbReference type="NCBIfam" id="TIGR00086">
    <property type="entry name" value="smpB"/>
    <property type="match status" value="1"/>
</dbReference>
<dbReference type="PANTHER" id="PTHR30308:SF2">
    <property type="entry name" value="SSRA-BINDING PROTEIN"/>
    <property type="match status" value="1"/>
</dbReference>
<dbReference type="PANTHER" id="PTHR30308">
    <property type="entry name" value="TMRNA-BINDING COMPONENT OF TRANS-TRANSLATION TAGGING COMPLEX"/>
    <property type="match status" value="1"/>
</dbReference>
<dbReference type="Pfam" id="PF01668">
    <property type="entry name" value="SmpB"/>
    <property type="match status" value="1"/>
</dbReference>
<dbReference type="SUPFAM" id="SSF74982">
    <property type="entry name" value="Small protein B (SmpB)"/>
    <property type="match status" value="1"/>
</dbReference>
<dbReference type="PROSITE" id="PS01317">
    <property type="entry name" value="SSRP"/>
    <property type="match status" value="1"/>
</dbReference>
<name>SSRP_STRZJ</name>
<sequence>MAKGEGKVVAQNKKARHDYTIVDTLEAGMVLTGTEIKSVRAARINLKDGFAQVKNGEVWLSNVHIAPYEEGNIWNQEPERRRKLLLHKKQIQKLEQETKGTGMTLVPLKVYIKDGYAKLLLGLAKGKHDYDKRESIKRREQNRDIARVMKAVNQR</sequence>
<comment type="function">
    <text evidence="1">Required for rescue of stalled ribosomes mediated by trans-translation. Binds to transfer-messenger RNA (tmRNA), required for stable association of tmRNA with ribosomes. tmRNA and SmpB together mimic tRNA shape, replacing the anticodon stem-loop with SmpB. tmRNA is encoded by the ssrA gene; the 2 termini fold to resemble tRNA(Ala) and it encodes a 'tag peptide', a short internal open reading frame. During trans-translation Ala-aminoacylated tmRNA acts like a tRNA, entering the A-site of stalled ribosomes, displacing the stalled mRNA. The ribosome then switches to translate the ORF on the tmRNA; the nascent peptide is terminated with the 'tag peptide' encoded by the tmRNA and targeted for degradation. The ribosome is freed to recommence translation, which seems to be the essential function of trans-translation.</text>
</comment>
<comment type="subcellular location">
    <subcellularLocation>
        <location evidence="1">Cytoplasm</location>
    </subcellularLocation>
    <text evidence="1">The tmRNA-SmpB complex associates with stalled 70S ribosomes.</text>
</comment>
<comment type="similarity">
    <text evidence="1">Belongs to the SmpB family.</text>
</comment>
<proteinExistence type="inferred from homology"/>
<gene>
    <name evidence="1" type="primary">smpB</name>
    <name type="ordered locus">SPJ_0917</name>
</gene>